<keyword id="KW-0067">ATP-binding</keyword>
<keyword id="KW-0963">Cytoplasm</keyword>
<keyword id="KW-0418">Kinase</keyword>
<keyword id="KW-0545">Nucleotide biosynthesis</keyword>
<keyword id="KW-0547">Nucleotide-binding</keyword>
<keyword id="KW-0808">Transferase</keyword>
<proteinExistence type="inferred from homology"/>
<name>KAD_HELPH</name>
<organism>
    <name type="scientific">Helicobacter pylori (strain HPAG1)</name>
    <dbReference type="NCBI Taxonomy" id="357544"/>
    <lineage>
        <taxon>Bacteria</taxon>
        <taxon>Pseudomonadati</taxon>
        <taxon>Campylobacterota</taxon>
        <taxon>Epsilonproteobacteria</taxon>
        <taxon>Campylobacterales</taxon>
        <taxon>Helicobacteraceae</taxon>
        <taxon>Helicobacter</taxon>
    </lineage>
</organism>
<feature type="chain" id="PRO_1000058840" description="Adenylate kinase">
    <location>
        <begin position="1"/>
        <end position="191"/>
    </location>
</feature>
<feature type="region of interest" description="NMP" evidence="1">
    <location>
        <begin position="34"/>
        <end position="63"/>
    </location>
</feature>
<feature type="region of interest" description="LID" evidence="1">
    <location>
        <begin position="130"/>
        <end position="136"/>
    </location>
</feature>
<feature type="binding site" evidence="1">
    <location>
        <begin position="12"/>
        <end position="17"/>
    </location>
    <ligand>
        <name>ATP</name>
        <dbReference type="ChEBI" id="CHEBI:30616"/>
    </ligand>
</feature>
<feature type="binding site" evidence="1">
    <location>
        <position position="35"/>
    </location>
    <ligand>
        <name>AMP</name>
        <dbReference type="ChEBI" id="CHEBI:456215"/>
    </ligand>
</feature>
<feature type="binding site" evidence="1">
    <location>
        <position position="40"/>
    </location>
    <ligand>
        <name>AMP</name>
        <dbReference type="ChEBI" id="CHEBI:456215"/>
    </ligand>
</feature>
<feature type="binding site" evidence="1">
    <location>
        <begin position="61"/>
        <end position="63"/>
    </location>
    <ligand>
        <name>AMP</name>
        <dbReference type="ChEBI" id="CHEBI:456215"/>
    </ligand>
</feature>
<feature type="binding site" evidence="1">
    <location>
        <begin position="88"/>
        <end position="91"/>
    </location>
    <ligand>
        <name>AMP</name>
        <dbReference type="ChEBI" id="CHEBI:456215"/>
    </ligand>
</feature>
<feature type="binding site" evidence="1">
    <location>
        <position position="95"/>
    </location>
    <ligand>
        <name>AMP</name>
        <dbReference type="ChEBI" id="CHEBI:456215"/>
    </ligand>
</feature>
<feature type="binding site" evidence="1">
    <location>
        <position position="131"/>
    </location>
    <ligand>
        <name>ATP</name>
        <dbReference type="ChEBI" id="CHEBI:30616"/>
    </ligand>
</feature>
<feature type="binding site" evidence="1">
    <location>
        <position position="133"/>
    </location>
    <ligand>
        <name>AMP</name>
        <dbReference type="ChEBI" id="CHEBI:456215"/>
    </ligand>
</feature>
<feature type="binding site" evidence="1">
    <location>
        <position position="145"/>
    </location>
    <ligand>
        <name>AMP</name>
        <dbReference type="ChEBI" id="CHEBI:456215"/>
    </ligand>
</feature>
<feature type="binding site" evidence="1">
    <location>
        <position position="173"/>
    </location>
    <ligand>
        <name>ATP</name>
        <dbReference type="ChEBI" id="CHEBI:30616"/>
    </ligand>
</feature>
<sequence>MKQLFLIIGAPGSGKTTDAELISKNNSETIAHFSTGDLLRAESAKKTERGLLIEKFTSQGELVPLEIVVETILSAIKSSSKRIILIDGYPRSVEQMQALDKELNAQNEVILKSVIEVEVSENTAKERVLGRSRGADDNEKVFHNRMRVFLDPLAEIQNFYKAKHLHKVINGERSIEEIVHEMQEYILSFGN</sequence>
<reference key="1">
    <citation type="journal article" date="2006" name="Proc. Natl. Acad. Sci. U.S.A.">
        <title>The complete genome sequence of a chronic atrophic gastritis Helicobacter pylori strain: evolution during disease progression.</title>
        <authorList>
            <person name="Oh J.D."/>
            <person name="Kling-Baeckhed H."/>
            <person name="Giannakis M."/>
            <person name="Xu J."/>
            <person name="Fulton R.S."/>
            <person name="Fulton L.A."/>
            <person name="Cordum H.S."/>
            <person name="Wang C."/>
            <person name="Elliott G."/>
            <person name="Edwards J."/>
            <person name="Mardis E.R."/>
            <person name="Engstrand L.G."/>
            <person name="Gordon J.I."/>
        </authorList>
    </citation>
    <scope>NUCLEOTIDE SEQUENCE [LARGE SCALE GENOMIC DNA]</scope>
    <source>
        <strain>HPAG1</strain>
    </source>
</reference>
<evidence type="ECO:0000255" key="1">
    <source>
        <dbReference type="HAMAP-Rule" id="MF_00235"/>
    </source>
</evidence>
<accession>Q1CTQ6</accession>
<protein>
    <recommendedName>
        <fullName evidence="1">Adenylate kinase</fullName>
        <shortName evidence="1">AK</shortName>
        <ecNumber evidence="1">2.7.4.3</ecNumber>
    </recommendedName>
    <alternativeName>
        <fullName evidence="1">ATP-AMP transphosphorylase</fullName>
    </alternativeName>
    <alternativeName>
        <fullName evidence="1">ATP:AMP phosphotransferase</fullName>
    </alternativeName>
    <alternativeName>
        <fullName evidence="1">Adenylate monophosphate kinase</fullName>
    </alternativeName>
</protein>
<comment type="function">
    <text evidence="1">Catalyzes the reversible transfer of the terminal phosphate group between ATP and AMP. Plays an important role in cellular energy homeostasis and in adenine nucleotide metabolism.</text>
</comment>
<comment type="catalytic activity">
    <reaction evidence="1">
        <text>AMP + ATP = 2 ADP</text>
        <dbReference type="Rhea" id="RHEA:12973"/>
        <dbReference type="ChEBI" id="CHEBI:30616"/>
        <dbReference type="ChEBI" id="CHEBI:456215"/>
        <dbReference type="ChEBI" id="CHEBI:456216"/>
        <dbReference type="EC" id="2.7.4.3"/>
    </reaction>
</comment>
<comment type="pathway">
    <text evidence="1">Purine metabolism; AMP biosynthesis via salvage pathway; AMP from ADP: step 1/1.</text>
</comment>
<comment type="subunit">
    <text evidence="1">Monomer.</text>
</comment>
<comment type="subcellular location">
    <subcellularLocation>
        <location evidence="1">Cytoplasm</location>
    </subcellularLocation>
</comment>
<comment type="domain">
    <text evidence="1">Consists of three domains, a large central CORE domain and two small peripheral domains, NMPbind and LID, which undergo movements during catalysis. The LID domain closes over the site of phosphoryl transfer upon ATP binding. Assembling and dissambling the active center during each catalytic cycle provides an effective means to prevent ATP hydrolysis.</text>
</comment>
<comment type="similarity">
    <text evidence="1">Belongs to the adenylate kinase family.</text>
</comment>
<dbReference type="EC" id="2.7.4.3" evidence="1"/>
<dbReference type="EMBL" id="CP000241">
    <property type="protein sequence ID" value="ABF84666.1"/>
    <property type="molecule type" value="Genomic_DNA"/>
</dbReference>
<dbReference type="RefSeq" id="WP_000811295.1">
    <property type="nucleotide sequence ID" value="NC_008086.1"/>
</dbReference>
<dbReference type="SMR" id="Q1CTQ6"/>
<dbReference type="KEGG" id="hpa:HPAG1_0599"/>
<dbReference type="HOGENOM" id="CLU_032354_4_1_7"/>
<dbReference type="UniPathway" id="UPA00588">
    <property type="reaction ID" value="UER00649"/>
</dbReference>
<dbReference type="GO" id="GO:0005737">
    <property type="term" value="C:cytoplasm"/>
    <property type="evidence" value="ECO:0007669"/>
    <property type="project" value="UniProtKB-SubCell"/>
</dbReference>
<dbReference type="GO" id="GO:0004017">
    <property type="term" value="F:adenylate kinase activity"/>
    <property type="evidence" value="ECO:0007669"/>
    <property type="project" value="UniProtKB-UniRule"/>
</dbReference>
<dbReference type="GO" id="GO:0005524">
    <property type="term" value="F:ATP binding"/>
    <property type="evidence" value="ECO:0007669"/>
    <property type="project" value="UniProtKB-UniRule"/>
</dbReference>
<dbReference type="GO" id="GO:0044209">
    <property type="term" value="P:AMP salvage"/>
    <property type="evidence" value="ECO:0007669"/>
    <property type="project" value="UniProtKB-UniRule"/>
</dbReference>
<dbReference type="CDD" id="cd01428">
    <property type="entry name" value="ADK"/>
    <property type="match status" value="1"/>
</dbReference>
<dbReference type="Gene3D" id="3.40.50.300">
    <property type="entry name" value="P-loop containing nucleotide triphosphate hydrolases"/>
    <property type="match status" value="1"/>
</dbReference>
<dbReference type="HAMAP" id="MF_00235">
    <property type="entry name" value="Adenylate_kinase_Adk"/>
    <property type="match status" value="1"/>
</dbReference>
<dbReference type="InterPro" id="IPR000850">
    <property type="entry name" value="Adenylat/UMP-CMP_kin"/>
</dbReference>
<dbReference type="InterPro" id="IPR033690">
    <property type="entry name" value="Adenylat_kinase_CS"/>
</dbReference>
<dbReference type="InterPro" id="IPR027417">
    <property type="entry name" value="P-loop_NTPase"/>
</dbReference>
<dbReference type="NCBIfam" id="NF001384">
    <property type="entry name" value="PRK00279.2-2"/>
    <property type="match status" value="1"/>
</dbReference>
<dbReference type="PANTHER" id="PTHR23359">
    <property type="entry name" value="NUCLEOTIDE KINASE"/>
    <property type="match status" value="1"/>
</dbReference>
<dbReference type="Pfam" id="PF00406">
    <property type="entry name" value="ADK"/>
    <property type="match status" value="1"/>
</dbReference>
<dbReference type="PRINTS" id="PR00094">
    <property type="entry name" value="ADENYLTKNASE"/>
</dbReference>
<dbReference type="SUPFAM" id="SSF52540">
    <property type="entry name" value="P-loop containing nucleoside triphosphate hydrolases"/>
    <property type="match status" value="1"/>
</dbReference>
<dbReference type="PROSITE" id="PS00113">
    <property type="entry name" value="ADENYLATE_KINASE"/>
    <property type="match status" value="1"/>
</dbReference>
<gene>
    <name evidence="1" type="primary">adk</name>
    <name type="ordered locus">HPAG1_0599</name>
</gene>